<feature type="chain" id="PRO_0000406739" description="Pentafunctional AROM polypeptide">
    <location>
        <begin position="1"/>
        <end position="1576"/>
    </location>
</feature>
<feature type="region of interest" description="3-dehydroquinate synthase">
    <location>
        <begin position="1"/>
        <end position="387"/>
    </location>
</feature>
<feature type="region of interest" description="EPSP synthase">
    <location>
        <begin position="400"/>
        <end position="841"/>
    </location>
</feature>
<feature type="region of interest" description="Shikimate kinase">
    <location>
        <begin position="863"/>
        <end position="1055"/>
    </location>
</feature>
<feature type="region of interest" description="3-dehydroquinase">
    <location>
        <begin position="1056"/>
        <end position="1276"/>
    </location>
</feature>
<feature type="region of interest" description="Shikimate dehydrogenase">
    <location>
        <begin position="1289"/>
        <end position="1576"/>
    </location>
</feature>
<feature type="active site" description="Proton acceptor; for 3-dehydroquinate synthase activity" evidence="1">
    <location>
        <position position="263"/>
    </location>
</feature>
<feature type="active site" description="Proton acceptor; for 3-dehydroquinate synthase activity" evidence="1">
    <location>
        <position position="278"/>
    </location>
</feature>
<feature type="active site" description="For EPSP synthase activity" evidence="1">
    <location>
        <position position="823"/>
    </location>
</feature>
<feature type="active site" description="Proton acceptor; for 3-dehydroquinate dehydratase activity" evidence="1">
    <location>
        <position position="1179"/>
    </location>
</feature>
<feature type="active site" description="Schiff-base intermediate with substrate; for 3-dehydroquinate dehydratase activity" evidence="1">
    <location>
        <position position="1207"/>
    </location>
</feature>
<feature type="binding site" evidence="1">
    <location>
        <begin position="49"/>
        <end position="51"/>
    </location>
    <ligand>
        <name>NAD(+)</name>
        <dbReference type="ChEBI" id="CHEBI:57540"/>
    </ligand>
</feature>
<feature type="binding site" evidence="1">
    <location>
        <begin position="86"/>
        <end position="89"/>
    </location>
    <ligand>
        <name>NAD(+)</name>
        <dbReference type="ChEBI" id="CHEBI:57540"/>
    </ligand>
</feature>
<feature type="binding site" evidence="1">
    <location>
        <begin position="117"/>
        <end position="119"/>
    </location>
    <ligand>
        <name>NAD(+)</name>
        <dbReference type="ChEBI" id="CHEBI:57540"/>
    </ligand>
</feature>
<feature type="binding site" evidence="1">
    <location>
        <position position="122"/>
    </location>
    <ligand>
        <name>NAD(+)</name>
        <dbReference type="ChEBI" id="CHEBI:57540"/>
    </ligand>
</feature>
<feature type="binding site" evidence="1">
    <location>
        <position position="133"/>
    </location>
    <ligand>
        <name>7-phospho-2-dehydro-3-deoxy-D-arabino-heptonate</name>
        <dbReference type="ChEBI" id="CHEBI:58394"/>
    </ligand>
</feature>
<feature type="binding site" evidence="1">
    <location>
        <begin position="142"/>
        <end position="143"/>
    </location>
    <ligand>
        <name>NAD(+)</name>
        <dbReference type="ChEBI" id="CHEBI:57540"/>
    </ligand>
</feature>
<feature type="binding site" evidence="1">
    <location>
        <position position="149"/>
    </location>
    <ligand>
        <name>7-phospho-2-dehydro-3-deoxy-D-arabino-heptonate</name>
        <dbReference type="ChEBI" id="CHEBI:58394"/>
    </ligand>
</feature>
<feature type="binding site" evidence="1">
    <location>
        <position position="155"/>
    </location>
    <ligand>
        <name>7-phospho-2-dehydro-3-deoxy-D-arabino-heptonate</name>
        <dbReference type="ChEBI" id="CHEBI:58394"/>
    </ligand>
</feature>
<feature type="binding site" evidence="1">
    <location>
        <position position="164"/>
    </location>
    <ligand>
        <name>NAD(+)</name>
        <dbReference type="ChEBI" id="CHEBI:57540"/>
    </ligand>
</feature>
<feature type="binding site" evidence="1">
    <location>
        <position position="165"/>
    </location>
    <ligand>
        <name>7-phospho-2-dehydro-3-deoxy-D-arabino-heptonate</name>
        <dbReference type="ChEBI" id="CHEBI:58394"/>
    </ligand>
</feature>
<feature type="binding site" evidence="1">
    <location>
        <begin position="182"/>
        <end position="185"/>
    </location>
    <ligand>
        <name>NAD(+)</name>
        <dbReference type="ChEBI" id="CHEBI:57540"/>
    </ligand>
</feature>
<feature type="binding site" evidence="1">
    <location>
        <position position="193"/>
    </location>
    <ligand>
        <name>NAD(+)</name>
        <dbReference type="ChEBI" id="CHEBI:57540"/>
    </ligand>
</feature>
<feature type="binding site" evidence="1">
    <location>
        <begin position="197"/>
        <end position="200"/>
    </location>
    <ligand>
        <name>7-phospho-2-dehydro-3-deoxy-D-arabino-heptonate</name>
        <dbReference type="ChEBI" id="CHEBI:58394"/>
    </ligand>
</feature>
<feature type="binding site" evidence="1">
    <location>
        <position position="197"/>
    </location>
    <ligand>
        <name>Zn(2+)</name>
        <dbReference type="ChEBI" id="CHEBI:29105"/>
        <note>catalytic</note>
    </ligand>
</feature>
<feature type="binding site" evidence="1">
    <location>
        <position position="253"/>
    </location>
    <ligand>
        <name>7-phospho-2-dehydro-3-deoxy-D-arabino-heptonate</name>
        <dbReference type="ChEBI" id="CHEBI:58394"/>
    </ligand>
</feature>
<feature type="binding site" evidence="1">
    <location>
        <begin position="267"/>
        <end position="271"/>
    </location>
    <ligand>
        <name>7-phospho-2-dehydro-3-deoxy-D-arabino-heptonate</name>
        <dbReference type="ChEBI" id="CHEBI:58394"/>
    </ligand>
</feature>
<feature type="binding site" evidence="1">
    <location>
        <position position="274"/>
    </location>
    <ligand>
        <name>7-phospho-2-dehydro-3-deoxy-D-arabino-heptonate</name>
        <dbReference type="ChEBI" id="CHEBI:58394"/>
    </ligand>
</feature>
<feature type="binding site" evidence="1">
    <location>
        <position position="274"/>
    </location>
    <ligand>
        <name>Zn(2+)</name>
        <dbReference type="ChEBI" id="CHEBI:29105"/>
        <note>catalytic</note>
    </ligand>
</feature>
<feature type="binding site" evidence="1">
    <location>
        <position position="290"/>
    </location>
    <ligand>
        <name>7-phospho-2-dehydro-3-deoxy-D-arabino-heptonate</name>
        <dbReference type="ChEBI" id="CHEBI:58394"/>
    </ligand>
</feature>
<feature type="binding site" evidence="1">
    <location>
        <position position="290"/>
    </location>
    <ligand>
        <name>Zn(2+)</name>
        <dbReference type="ChEBI" id="CHEBI:29105"/>
        <note>catalytic</note>
    </ligand>
</feature>
<feature type="binding site" evidence="1">
    <location>
        <position position="359"/>
    </location>
    <ligand>
        <name>7-phospho-2-dehydro-3-deoxy-D-arabino-heptonate</name>
        <dbReference type="ChEBI" id="CHEBI:58394"/>
    </ligand>
</feature>
<feature type="binding site" evidence="1">
    <location>
        <begin position="870"/>
        <end position="877"/>
    </location>
    <ligand>
        <name>ATP</name>
        <dbReference type="ChEBI" id="CHEBI:30616"/>
    </ligand>
</feature>
<sequence length="1576" mass="170893">MGSTTFENPTRIEILGKEDIIVDFDIWRNFVAEDLLSDLPSSTYVLITDTNLSPLYVPAFQQSFEALAAKSSSTPRLLTYEIPPGENSKSRETKAEIEDWMLSHQCTRDSVIIALGGGVIGDMIGYVAATFMRGVRFVQVPTTLLAMVDSSIGGKTAIDTPLGKNLVGAFWQPQRIYIDLRFLETLPVREFINGMAEVVKTAAIWDEAEFSALEDNANLIMTTIRAKNTDCSTRLGPIRDILKRIVLGSAKTKADVVSADEREGGLRNILNFGHSIGHAFEAILTPQVLHGEAVAIGMVKEAELARHLGVLKPGAVARLVKCIASYGLPTSLADKRIQKLTAGKLCPVDVLLEKMGVDKKNDGRKKKIVLLSAIGKTYEPKASVVEDRSIRVVLSDSVEVRPSVPETLNVEVTPPGSKSISNRALVLAALGTGPCRIKNLLHSDDVEFMLTSIGKLGGATYAWEDAGEVLCVQGKGGDLHASPTELYIGNAGTASRFLTTVVSLCKPSASTKSTILTGNARMKVRPIGPLVDSLRANGVDIEYLEKEHSLPLNVAASGGFTGGDINLAATVSSQYVSSLLMCAPYAKNPVTLRLVGGKPISQLYIDMTTAMMAAFGIHVVRSQTEEHTYHIPQGVYKNPEEYVVESDASSATYPLAVAAISGTTCTIPNIGCKSIQGDARFAIDVLKPMGCKVVQTDYSTTVTGPPIGSLQAIEEVDMEPMTDAFLTASVLGAVAKGTTKIRGIANQRVKECNRIKAMKDELAKFGVTCRELEDGIEVDGVPIKDLKHPAEGIHCYDDHRVAMSFSVLSVAASQPVLIEERECVGKTWPGWWDILSKSFQVELAGKEVKATHSKKIGIPALPDKSIFIIGMRGAGKTTAGAWAAKILGRPYKDLDVELERISGMSIPDMVRSKGWDFFRAAELDLLKHCLTDQPEKHVFACGGGVVEMPEARELLINFHKSGGIVLLVHRDTEQVMDYLRIDKTRPAYVEDMMGVYSRRKPWFNECSNFQYHSKGSGASALSVAEQDFARFLHHISGKSLHFDEMRNKPQSFFVSLTMPDISGAAYILPSVAVGSDAVEVRVDLLEDPSSTNGIPGTDFLSVQIAHLRSVVHLPVIFTVRTVSQGGRFPDAAHEEALKLYKLAVKMGIEYIDLEIAFPDELLQEVTEAKGFSRIIASHHDPQGTLSWKNGGWFQHYNRALQYGDIIKLVGSAKSIEDNFALAKFKKTMAAAHDTPLIAINMGVTGKLSRVLNGFMTPVSHPSLPFKAAPGQLSAAEIRSTLSTLGEIEPKSFYLFGTPISQSRSPALHNTLFKQTGLPHRYSRLETDRVADVQDVIRAPDFGGASVTIPLKLDIIPLLDSVTDAVKVIGAVNTIIPTPDNPPRLVGENTDWLGMTHSLMSASHTPSPVDSPSPALVIGAGGTARAAIYALHSLGHSPIYMVARTPSKLDTLINSFPSSFNIIPLPSTTSATELTTPPAVAISTIPADRPIESNMRETLAVLLRHEKKDEGKQRTLLEMAYKPSQTPLMRMAEDAGWVAIPGLEVLSAQGWYQFQKWTSIQPLYVDARAAVMGDSTA</sequence>
<evidence type="ECO:0000255" key="1">
    <source>
        <dbReference type="HAMAP-Rule" id="MF_03143"/>
    </source>
</evidence>
<reference key="1">
    <citation type="journal article" date="2011" name="PLoS Genet.">
        <title>Genomic analysis of the necrotrophic fungal pathogens Sclerotinia sclerotiorum and Botrytis cinerea.</title>
        <authorList>
            <person name="Amselem J."/>
            <person name="Cuomo C.A."/>
            <person name="van Kan J.A.L."/>
            <person name="Viaud M."/>
            <person name="Benito E.P."/>
            <person name="Couloux A."/>
            <person name="Coutinho P.M."/>
            <person name="de Vries R.P."/>
            <person name="Dyer P.S."/>
            <person name="Fillinger S."/>
            <person name="Fournier E."/>
            <person name="Gout L."/>
            <person name="Hahn M."/>
            <person name="Kohn L."/>
            <person name="Lapalu N."/>
            <person name="Plummer K.M."/>
            <person name="Pradier J.-M."/>
            <person name="Quevillon E."/>
            <person name="Sharon A."/>
            <person name="Simon A."/>
            <person name="ten Have A."/>
            <person name="Tudzynski B."/>
            <person name="Tudzynski P."/>
            <person name="Wincker P."/>
            <person name="Andrew M."/>
            <person name="Anthouard V."/>
            <person name="Beever R.E."/>
            <person name="Beffa R."/>
            <person name="Benoit I."/>
            <person name="Bouzid O."/>
            <person name="Brault B."/>
            <person name="Chen Z."/>
            <person name="Choquer M."/>
            <person name="Collemare J."/>
            <person name="Cotton P."/>
            <person name="Danchin E.G."/>
            <person name="Da Silva C."/>
            <person name="Gautier A."/>
            <person name="Giraud C."/>
            <person name="Giraud T."/>
            <person name="Gonzalez C."/>
            <person name="Grossetete S."/>
            <person name="Gueldener U."/>
            <person name="Henrissat B."/>
            <person name="Howlett B.J."/>
            <person name="Kodira C."/>
            <person name="Kretschmer M."/>
            <person name="Lappartient A."/>
            <person name="Leroch M."/>
            <person name="Levis C."/>
            <person name="Mauceli E."/>
            <person name="Neuveglise C."/>
            <person name="Oeser B."/>
            <person name="Pearson M."/>
            <person name="Poulain J."/>
            <person name="Poussereau N."/>
            <person name="Quesneville H."/>
            <person name="Rascle C."/>
            <person name="Schumacher J."/>
            <person name="Segurens B."/>
            <person name="Sexton A."/>
            <person name="Silva E."/>
            <person name="Sirven C."/>
            <person name="Soanes D.M."/>
            <person name="Talbot N.J."/>
            <person name="Templeton M."/>
            <person name="Yandava C."/>
            <person name="Yarden O."/>
            <person name="Zeng Q."/>
            <person name="Rollins J.A."/>
            <person name="Lebrun M.-H."/>
            <person name="Dickman M."/>
        </authorList>
    </citation>
    <scope>NUCLEOTIDE SEQUENCE [LARGE SCALE GENOMIC DNA]</scope>
    <source>
        <strain>ATCC 18683 / 1980 / Ss-1</strain>
    </source>
</reference>
<gene>
    <name type="ORF">SS1G_13550</name>
</gene>
<keyword id="KW-0028">Amino-acid biosynthesis</keyword>
<keyword id="KW-0057">Aromatic amino acid biosynthesis</keyword>
<keyword id="KW-0067">ATP-binding</keyword>
<keyword id="KW-0963">Cytoplasm</keyword>
<keyword id="KW-0418">Kinase</keyword>
<keyword id="KW-0456">Lyase</keyword>
<keyword id="KW-0479">Metal-binding</keyword>
<keyword id="KW-0511">Multifunctional enzyme</keyword>
<keyword id="KW-0521">NADP</keyword>
<keyword id="KW-0547">Nucleotide-binding</keyword>
<keyword id="KW-0560">Oxidoreductase</keyword>
<keyword id="KW-1185">Reference proteome</keyword>
<keyword id="KW-0808">Transferase</keyword>
<keyword id="KW-0862">Zinc</keyword>
<dbReference type="EC" id="4.2.3.4" evidence="1"/>
<dbReference type="EC" id="2.5.1.19" evidence="1"/>
<dbReference type="EC" id="2.7.1.71" evidence="1"/>
<dbReference type="EC" id="4.2.1.10" evidence="1"/>
<dbReference type="EC" id="1.1.1.25" evidence="1"/>
<dbReference type="EMBL" id="CH476645">
    <property type="protein sequence ID" value="EDN98691.1"/>
    <property type="molecule type" value="Genomic_DNA"/>
</dbReference>
<dbReference type="RefSeq" id="XP_001585666.1">
    <property type="nucleotide sequence ID" value="XM_001585616.1"/>
</dbReference>
<dbReference type="SMR" id="A7F7H0"/>
<dbReference type="FunCoup" id="A7F7H0">
    <property type="interactions" value="440"/>
</dbReference>
<dbReference type="STRING" id="665079.A7F7H0"/>
<dbReference type="EnsemblFungi" id="EDN98691">
    <property type="protein sequence ID" value="EDN98691"/>
    <property type="gene ID" value="SS1G_13550"/>
</dbReference>
<dbReference type="GeneID" id="5481619"/>
<dbReference type="KEGG" id="ssl:SS1G_13550"/>
<dbReference type="VEuPathDB" id="FungiDB:sscle_15g103530"/>
<dbReference type="eggNOG" id="KOG0692">
    <property type="taxonomic scope" value="Eukaryota"/>
</dbReference>
<dbReference type="HOGENOM" id="CLU_001201_1_1_1"/>
<dbReference type="InParanoid" id="A7F7H0"/>
<dbReference type="OMA" id="SWANMSW"/>
<dbReference type="OrthoDB" id="197068at2759"/>
<dbReference type="UniPathway" id="UPA00053">
    <property type="reaction ID" value="UER00085"/>
</dbReference>
<dbReference type="UniPathway" id="UPA00053">
    <property type="reaction ID" value="UER00086"/>
</dbReference>
<dbReference type="UniPathway" id="UPA00053">
    <property type="reaction ID" value="UER00087"/>
</dbReference>
<dbReference type="UniPathway" id="UPA00053">
    <property type="reaction ID" value="UER00088"/>
</dbReference>
<dbReference type="UniPathway" id="UPA00053">
    <property type="reaction ID" value="UER00089"/>
</dbReference>
<dbReference type="Proteomes" id="UP000001312">
    <property type="component" value="Unassembled WGS sequence"/>
</dbReference>
<dbReference type="GO" id="GO:0005737">
    <property type="term" value="C:cytoplasm"/>
    <property type="evidence" value="ECO:0007669"/>
    <property type="project" value="UniProtKB-SubCell"/>
</dbReference>
<dbReference type="GO" id="GO:0003855">
    <property type="term" value="F:3-dehydroquinate dehydratase activity"/>
    <property type="evidence" value="ECO:0007669"/>
    <property type="project" value="UniProtKB-UniRule"/>
</dbReference>
<dbReference type="GO" id="GO:0003856">
    <property type="term" value="F:3-dehydroquinate synthase activity"/>
    <property type="evidence" value="ECO:0007669"/>
    <property type="project" value="UniProtKB-UniRule"/>
</dbReference>
<dbReference type="GO" id="GO:0003866">
    <property type="term" value="F:3-phosphoshikimate 1-carboxyvinyltransferase activity"/>
    <property type="evidence" value="ECO:0000318"/>
    <property type="project" value="GO_Central"/>
</dbReference>
<dbReference type="GO" id="GO:0005524">
    <property type="term" value="F:ATP binding"/>
    <property type="evidence" value="ECO:0007669"/>
    <property type="project" value="UniProtKB-UniRule"/>
</dbReference>
<dbReference type="GO" id="GO:0046872">
    <property type="term" value="F:metal ion binding"/>
    <property type="evidence" value="ECO:0007669"/>
    <property type="project" value="UniProtKB-UniRule"/>
</dbReference>
<dbReference type="GO" id="GO:0004764">
    <property type="term" value="F:shikimate 3-dehydrogenase (NADP+) activity"/>
    <property type="evidence" value="ECO:0007669"/>
    <property type="project" value="UniProtKB-UniRule"/>
</dbReference>
<dbReference type="GO" id="GO:0004765">
    <property type="term" value="F:shikimate kinase activity"/>
    <property type="evidence" value="ECO:0007669"/>
    <property type="project" value="UniProtKB-UniRule"/>
</dbReference>
<dbReference type="GO" id="GO:0008652">
    <property type="term" value="P:amino acid biosynthetic process"/>
    <property type="evidence" value="ECO:0007669"/>
    <property type="project" value="UniProtKB-KW"/>
</dbReference>
<dbReference type="GO" id="GO:0009073">
    <property type="term" value="P:aromatic amino acid family biosynthetic process"/>
    <property type="evidence" value="ECO:0007669"/>
    <property type="project" value="UniProtKB-UniRule"/>
</dbReference>
<dbReference type="GO" id="GO:0009423">
    <property type="term" value="P:chorismate biosynthetic process"/>
    <property type="evidence" value="ECO:0000318"/>
    <property type="project" value="GO_Central"/>
</dbReference>
<dbReference type="CDD" id="cd00502">
    <property type="entry name" value="DHQase_I"/>
    <property type="match status" value="1"/>
</dbReference>
<dbReference type="CDD" id="cd08195">
    <property type="entry name" value="DHQS"/>
    <property type="match status" value="1"/>
</dbReference>
<dbReference type="CDD" id="cd01556">
    <property type="entry name" value="EPSP_synthase"/>
    <property type="match status" value="1"/>
</dbReference>
<dbReference type="CDD" id="cd01065">
    <property type="entry name" value="NAD_bind_Shikimate_DH"/>
    <property type="match status" value="1"/>
</dbReference>
<dbReference type="CDD" id="cd00464">
    <property type="entry name" value="SK"/>
    <property type="match status" value="1"/>
</dbReference>
<dbReference type="FunFam" id="1.20.1090.10:FF:000007">
    <property type="entry name" value="Pentafunctional AROM polypeptide"/>
    <property type="match status" value="1"/>
</dbReference>
<dbReference type="FunFam" id="3.20.20.70:FF:000135">
    <property type="entry name" value="Pentafunctional AROM polypeptide"/>
    <property type="match status" value="1"/>
</dbReference>
<dbReference type="FunFam" id="3.40.50.10860:FF:000015">
    <property type="entry name" value="Pentafunctional AROM polypeptide"/>
    <property type="match status" value="1"/>
</dbReference>
<dbReference type="FunFam" id="3.40.50.1970:FF:000007">
    <property type="entry name" value="Pentafunctional AROM polypeptide"/>
    <property type="match status" value="1"/>
</dbReference>
<dbReference type="FunFam" id="3.40.50.300:FF:001256">
    <property type="entry name" value="Pentafunctional AROM polypeptide"/>
    <property type="match status" value="1"/>
</dbReference>
<dbReference type="FunFam" id="3.65.10.10:FF:000007">
    <property type="entry name" value="Pentafunctional AROM polypeptide"/>
    <property type="match status" value="1"/>
</dbReference>
<dbReference type="FunFam" id="3.65.10.10:FF:000008">
    <property type="entry name" value="Pentafunctional AROM polypeptide"/>
    <property type="match status" value="1"/>
</dbReference>
<dbReference type="Gene3D" id="3.40.50.1970">
    <property type="match status" value="1"/>
</dbReference>
<dbReference type="Gene3D" id="3.20.20.70">
    <property type="entry name" value="Aldolase class I"/>
    <property type="match status" value="1"/>
</dbReference>
<dbReference type="Gene3D" id="1.20.1090.10">
    <property type="entry name" value="Dehydroquinate synthase-like - alpha domain"/>
    <property type="match status" value="1"/>
</dbReference>
<dbReference type="Gene3D" id="3.65.10.10">
    <property type="entry name" value="Enolpyruvate transferase domain"/>
    <property type="match status" value="2"/>
</dbReference>
<dbReference type="Gene3D" id="3.40.50.10860">
    <property type="entry name" value="Leucine Dehydrogenase, chain A, domain 1"/>
    <property type="match status" value="1"/>
</dbReference>
<dbReference type="Gene3D" id="3.40.50.720">
    <property type="entry name" value="NAD(P)-binding Rossmann-like Domain"/>
    <property type="match status" value="1"/>
</dbReference>
<dbReference type="Gene3D" id="3.40.50.300">
    <property type="entry name" value="P-loop containing nucleotide triphosphate hydrolases"/>
    <property type="match status" value="1"/>
</dbReference>
<dbReference type="HAMAP" id="MF_00210">
    <property type="entry name" value="EPSP_synth"/>
    <property type="match status" value="1"/>
</dbReference>
<dbReference type="HAMAP" id="MF_03143">
    <property type="entry name" value="Pentafunct_AroM"/>
    <property type="match status" value="1"/>
</dbReference>
<dbReference type="HAMAP" id="MF_00109">
    <property type="entry name" value="Shikimate_kinase"/>
    <property type="match status" value="1"/>
</dbReference>
<dbReference type="InterPro" id="IPR018508">
    <property type="entry name" value="3-dehydroquinate_DH_AS"/>
</dbReference>
<dbReference type="InterPro" id="IPR013785">
    <property type="entry name" value="Aldolase_TIM"/>
</dbReference>
<dbReference type="InterPro" id="IPR046346">
    <property type="entry name" value="Aminoacid_DH-like_N_sf"/>
</dbReference>
<dbReference type="InterPro" id="IPR016037">
    <property type="entry name" value="DHQ_synth_AroB"/>
</dbReference>
<dbReference type="InterPro" id="IPR030960">
    <property type="entry name" value="DHQS/DOIS_N"/>
</dbReference>
<dbReference type="InterPro" id="IPR056179">
    <property type="entry name" value="DHQS_C"/>
</dbReference>
<dbReference type="InterPro" id="IPR001381">
    <property type="entry name" value="DHquinase_I"/>
</dbReference>
<dbReference type="InterPro" id="IPR001986">
    <property type="entry name" value="Enolpyruvate_Tfrase_dom"/>
</dbReference>
<dbReference type="InterPro" id="IPR036968">
    <property type="entry name" value="Enolpyruvate_Tfrase_sf"/>
</dbReference>
<dbReference type="InterPro" id="IPR006264">
    <property type="entry name" value="EPSP_synthase"/>
</dbReference>
<dbReference type="InterPro" id="IPR023193">
    <property type="entry name" value="EPSP_synthase_CS"/>
</dbReference>
<dbReference type="InterPro" id="IPR036291">
    <property type="entry name" value="NAD(P)-bd_dom_sf"/>
</dbReference>
<dbReference type="InterPro" id="IPR027417">
    <property type="entry name" value="P-loop_NTPase"/>
</dbReference>
<dbReference type="InterPro" id="IPR008289">
    <property type="entry name" value="Pentafunct_AroM"/>
</dbReference>
<dbReference type="InterPro" id="IPR013792">
    <property type="entry name" value="RNA3'P_cycl/enolpyr_Trfase_a/b"/>
</dbReference>
<dbReference type="InterPro" id="IPR031322">
    <property type="entry name" value="Shikimate/glucono_kinase"/>
</dbReference>
<dbReference type="InterPro" id="IPR013708">
    <property type="entry name" value="Shikimate_DH-bd_N"/>
</dbReference>
<dbReference type="InterPro" id="IPR010110">
    <property type="entry name" value="Shikimate_DH_AroM-type"/>
</dbReference>
<dbReference type="InterPro" id="IPR000623">
    <property type="entry name" value="Shikimate_kinase/TSH1"/>
</dbReference>
<dbReference type="InterPro" id="IPR023000">
    <property type="entry name" value="Shikimate_kinase_CS"/>
</dbReference>
<dbReference type="NCBIfam" id="TIGR01356">
    <property type="entry name" value="aroA"/>
    <property type="match status" value="1"/>
</dbReference>
<dbReference type="NCBIfam" id="TIGR01357">
    <property type="entry name" value="aroB"/>
    <property type="match status" value="1"/>
</dbReference>
<dbReference type="NCBIfam" id="TIGR01093">
    <property type="entry name" value="aroD"/>
    <property type="match status" value="1"/>
</dbReference>
<dbReference type="NCBIfam" id="TIGR01809">
    <property type="entry name" value="Shik-DH-AROM"/>
    <property type="match status" value="1"/>
</dbReference>
<dbReference type="PANTHER" id="PTHR21090">
    <property type="entry name" value="AROM/DEHYDROQUINATE SYNTHASE"/>
    <property type="match status" value="1"/>
</dbReference>
<dbReference type="PANTHER" id="PTHR21090:SF5">
    <property type="entry name" value="PENTAFUNCTIONAL AROM POLYPEPTIDE"/>
    <property type="match status" value="1"/>
</dbReference>
<dbReference type="Pfam" id="PF01761">
    <property type="entry name" value="DHQ_synthase"/>
    <property type="match status" value="1"/>
</dbReference>
<dbReference type="Pfam" id="PF24621">
    <property type="entry name" value="DHQS_C"/>
    <property type="match status" value="1"/>
</dbReference>
<dbReference type="Pfam" id="PF01487">
    <property type="entry name" value="DHquinase_I"/>
    <property type="match status" value="1"/>
</dbReference>
<dbReference type="Pfam" id="PF00275">
    <property type="entry name" value="EPSP_synthase"/>
    <property type="match status" value="1"/>
</dbReference>
<dbReference type="Pfam" id="PF08501">
    <property type="entry name" value="Shikimate_dh_N"/>
    <property type="match status" value="1"/>
</dbReference>
<dbReference type="Pfam" id="PF01202">
    <property type="entry name" value="SKI"/>
    <property type="match status" value="1"/>
</dbReference>
<dbReference type="PIRSF" id="PIRSF000514">
    <property type="entry name" value="Pentafunct_AroM"/>
    <property type="match status" value="1"/>
</dbReference>
<dbReference type="PRINTS" id="PR01100">
    <property type="entry name" value="SHIKIMTKNASE"/>
</dbReference>
<dbReference type="SUPFAM" id="SSF51569">
    <property type="entry name" value="Aldolase"/>
    <property type="match status" value="1"/>
</dbReference>
<dbReference type="SUPFAM" id="SSF53223">
    <property type="entry name" value="Aminoacid dehydrogenase-like, N-terminal domain"/>
    <property type="match status" value="1"/>
</dbReference>
<dbReference type="SUPFAM" id="SSF56796">
    <property type="entry name" value="Dehydroquinate synthase-like"/>
    <property type="match status" value="1"/>
</dbReference>
<dbReference type="SUPFAM" id="SSF55205">
    <property type="entry name" value="EPT/RTPC-like"/>
    <property type="match status" value="1"/>
</dbReference>
<dbReference type="SUPFAM" id="SSF51735">
    <property type="entry name" value="NAD(P)-binding Rossmann-fold domains"/>
    <property type="match status" value="1"/>
</dbReference>
<dbReference type="SUPFAM" id="SSF52540">
    <property type="entry name" value="P-loop containing nucleoside triphosphate hydrolases"/>
    <property type="match status" value="1"/>
</dbReference>
<dbReference type="PROSITE" id="PS01028">
    <property type="entry name" value="DEHYDROQUINASE_I"/>
    <property type="match status" value="1"/>
</dbReference>
<dbReference type="PROSITE" id="PS00104">
    <property type="entry name" value="EPSP_SYNTHASE_1"/>
    <property type="match status" value="1"/>
</dbReference>
<dbReference type="PROSITE" id="PS00885">
    <property type="entry name" value="EPSP_SYNTHASE_2"/>
    <property type="match status" value="1"/>
</dbReference>
<dbReference type="PROSITE" id="PS01128">
    <property type="entry name" value="SHIKIMATE_KINASE"/>
    <property type="match status" value="1"/>
</dbReference>
<organism>
    <name type="scientific">Sclerotinia sclerotiorum (strain ATCC 18683 / 1980 / Ss-1)</name>
    <name type="common">White mold</name>
    <name type="synonym">Whetzelinia sclerotiorum</name>
    <dbReference type="NCBI Taxonomy" id="665079"/>
    <lineage>
        <taxon>Eukaryota</taxon>
        <taxon>Fungi</taxon>
        <taxon>Dikarya</taxon>
        <taxon>Ascomycota</taxon>
        <taxon>Pezizomycotina</taxon>
        <taxon>Leotiomycetes</taxon>
        <taxon>Helotiales</taxon>
        <taxon>Sclerotiniaceae</taxon>
        <taxon>Sclerotinia</taxon>
    </lineage>
</organism>
<proteinExistence type="inferred from homology"/>
<name>ARO1_SCLS1</name>
<protein>
    <recommendedName>
        <fullName evidence="1">Pentafunctional AROM polypeptide</fullName>
    </recommendedName>
    <domain>
        <recommendedName>
            <fullName evidence="1">3-dehydroquinate synthase</fullName>
            <shortName evidence="1">DHQS</shortName>
            <ecNumber evidence="1">4.2.3.4</ecNumber>
        </recommendedName>
    </domain>
    <domain>
        <recommendedName>
            <fullName evidence="1">3-phosphoshikimate 1-carboxyvinyltransferase</fullName>
            <ecNumber evidence="1">2.5.1.19</ecNumber>
        </recommendedName>
        <alternativeName>
            <fullName evidence="1">5-enolpyruvylshikimate-3-phosphate synthase</fullName>
            <shortName evidence="1">EPSP synthase</shortName>
            <shortName evidence="1">EPSPS</shortName>
        </alternativeName>
    </domain>
    <domain>
        <recommendedName>
            <fullName evidence="1">Shikimate kinase</fullName>
            <shortName evidence="1">SK</shortName>
            <ecNumber evidence="1">2.7.1.71</ecNumber>
        </recommendedName>
    </domain>
    <domain>
        <recommendedName>
            <fullName evidence="1">3-dehydroquinate dehydratase</fullName>
            <shortName evidence="1">3-dehydroquinase</shortName>
            <ecNumber evidence="1">4.2.1.10</ecNumber>
        </recommendedName>
    </domain>
    <domain>
        <recommendedName>
            <fullName evidence="1">Shikimate dehydrogenase</fullName>
            <ecNumber evidence="1">1.1.1.25</ecNumber>
        </recommendedName>
    </domain>
</protein>
<comment type="function">
    <text evidence="1">The AROM polypeptide catalyzes 5 consecutive enzymatic reactions in prechorismate polyaromatic amino acid biosynthesis.</text>
</comment>
<comment type="catalytic activity">
    <reaction evidence="1">
        <text>7-phospho-2-dehydro-3-deoxy-D-arabino-heptonate = 3-dehydroquinate + phosphate</text>
        <dbReference type="Rhea" id="RHEA:21968"/>
        <dbReference type="ChEBI" id="CHEBI:32364"/>
        <dbReference type="ChEBI" id="CHEBI:43474"/>
        <dbReference type="ChEBI" id="CHEBI:58394"/>
        <dbReference type="EC" id="4.2.3.4"/>
    </reaction>
</comment>
<comment type="catalytic activity">
    <reaction evidence="1">
        <text>3-dehydroquinate = 3-dehydroshikimate + H2O</text>
        <dbReference type="Rhea" id="RHEA:21096"/>
        <dbReference type="ChEBI" id="CHEBI:15377"/>
        <dbReference type="ChEBI" id="CHEBI:16630"/>
        <dbReference type="ChEBI" id="CHEBI:32364"/>
        <dbReference type="EC" id="4.2.1.10"/>
    </reaction>
</comment>
<comment type="catalytic activity">
    <reaction evidence="1">
        <text>shikimate + NADP(+) = 3-dehydroshikimate + NADPH + H(+)</text>
        <dbReference type="Rhea" id="RHEA:17737"/>
        <dbReference type="ChEBI" id="CHEBI:15378"/>
        <dbReference type="ChEBI" id="CHEBI:16630"/>
        <dbReference type="ChEBI" id="CHEBI:36208"/>
        <dbReference type="ChEBI" id="CHEBI:57783"/>
        <dbReference type="ChEBI" id="CHEBI:58349"/>
        <dbReference type="EC" id="1.1.1.25"/>
    </reaction>
</comment>
<comment type="catalytic activity">
    <reaction evidence="1">
        <text>shikimate + ATP = 3-phosphoshikimate + ADP + H(+)</text>
        <dbReference type="Rhea" id="RHEA:13121"/>
        <dbReference type="ChEBI" id="CHEBI:15378"/>
        <dbReference type="ChEBI" id="CHEBI:30616"/>
        <dbReference type="ChEBI" id="CHEBI:36208"/>
        <dbReference type="ChEBI" id="CHEBI:145989"/>
        <dbReference type="ChEBI" id="CHEBI:456216"/>
        <dbReference type="EC" id="2.7.1.71"/>
    </reaction>
</comment>
<comment type="catalytic activity">
    <reaction evidence="1">
        <text>3-phosphoshikimate + phosphoenolpyruvate = 5-O-(1-carboxyvinyl)-3-phosphoshikimate + phosphate</text>
        <dbReference type="Rhea" id="RHEA:21256"/>
        <dbReference type="ChEBI" id="CHEBI:43474"/>
        <dbReference type="ChEBI" id="CHEBI:57701"/>
        <dbReference type="ChEBI" id="CHEBI:58702"/>
        <dbReference type="ChEBI" id="CHEBI:145989"/>
        <dbReference type="EC" id="2.5.1.19"/>
    </reaction>
</comment>
<comment type="cofactor">
    <cofactor>
        <name>Zn(2+)</name>
        <dbReference type="ChEBI" id="CHEBI:29105"/>
    </cofactor>
    <text>Binds 2 Zn(2+) ions per subunit.</text>
</comment>
<comment type="pathway">
    <text evidence="1">Metabolic intermediate biosynthesis; chorismate biosynthesis; chorismate from D-erythrose 4-phosphate and phosphoenolpyruvate: step 2/7.</text>
</comment>
<comment type="pathway">
    <text evidence="1">Metabolic intermediate biosynthesis; chorismate biosynthesis; chorismate from D-erythrose 4-phosphate and phosphoenolpyruvate: step 3/7.</text>
</comment>
<comment type="pathway">
    <text evidence="1">Metabolic intermediate biosynthesis; chorismate biosynthesis; chorismate from D-erythrose 4-phosphate and phosphoenolpyruvate: step 4/7.</text>
</comment>
<comment type="pathway">
    <text evidence="1">Metabolic intermediate biosynthesis; chorismate biosynthesis; chorismate from D-erythrose 4-phosphate and phosphoenolpyruvate: step 5/7.</text>
</comment>
<comment type="pathway">
    <text evidence="1">Metabolic intermediate biosynthesis; chorismate biosynthesis; chorismate from D-erythrose 4-phosphate and phosphoenolpyruvate: step 6/7.</text>
</comment>
<comment type="subunit">
    <text evidence="1">Homodimer.</text>
</comment>
<comment type="subcellular location">
    <subcellularLocation>
        <location evidence="1">Cytoplasm</location>
    </subcellularLocation>
</comment>
<comment type="similarity">
    <text evidence="1">In the N-terminal section; belongs to the sugar phosphate cyclases superfamily. Dehydroquinate synthase family.</text>
</comment>
<comment type="similarity">
    <text evidence="1">In the 2nd section; belongs to the EPSP synthase family.</text>
</comment>
<comment type="similarity">
    <text evidence="1">In the 3rd section; belongs to the shikimate kinase family.</text>
</comment>
<comment type="similarity">
    <text evidence="1">In the 4th section; belongs to the type-I 3-dehydroquinase family.</text>
</comment>
<comment type="similarity">
    <text evidence="1">In the C-terminal section; belongs to the shikimate dehydrogenase family.</text>
</comment>
<accession>A7F7H0</accession>